<gene>
    <name type="primary">ATP6V1A</name>
    <name type="synonym">ATP6A1</name>
    <name type="synonym">ATP6V1A1</name>
</gene>
<protein>
    <recommendedName>
        <fullName>V-type proton ATPase catalytic subunit A</fullName>
        <shortName>V-ATPase subunit A</shortName>
        <ecNumber evidence="3">7.1.2.2</ecNumber>
    </recommendedName>
    <alternativeName>
        <fullName>V-ATPase 69 kDa subunit</fullName>
    </alternativeName>
    <alternativeName>
        <fullName>Vacuolar proton pump subunit alpha</fullName>
    </alternativeName>
</protein>
<sequence>MDFSKLPKIRDEDKESTFGYVHGVSGPVVTACDMAGAAMYELVRVGHSELVGEIIRLEGDMATIQVYEETSGVSVGDPVLRTGKPLSVELGPGIMGAIFDGIQRPLSDISSQTQSIYIPRGVNVSALSRDVKWDFTPCKNLRVGSHITGGDIYGIVNENSLIKHKIMLPPRNRGTVTYIAPPGNYDTSDVVLELEFEGIKEKFSMVQVWPVRQVRPVTEKLPANHPLLTGQRVLDALFPCVQGGTTAIPGAFGCGKTVISQSLSKYSNSDVIIYVGCGERGNEMSEVLRDFPELTMEVDGKVESIMKRTALVANTSNMPVAAREASIYTGITLSEYFRDMGYHVSMMADSTSRWAEALREISGRLAEMPADSGYPAYLGARLASFYERAGRVKCLGNPEREGSVSIVGAVSPPGGDFSDPVTSATLGIVQVFWGLDKKLAQRKHFPSVNWLISYSKYMRALDEYYDKHFTEFVPLRTKAKEILQEEEDLAEIVQLVGKASLAETDKITLEVAKLIKDDFLQQNGYTPYDRFCPFYKTVGMLSNMIAFYDMARRAVETTAQSDNKITWSIIREHMGEILYKLSSMKFKDPVKDGEAKIKADYAQLLEDMQNAFRSLED</sequence>
<evidence type="ECO:0000250" key="1">
    <source>
        <dbReference type="UniProtKB" id="P38606"/>
    </source>
</evidence>
<evidence type="ECO:0000250" key="2">
    <source>
        <dbReference type="UniProtKB" id="P50516"/>
    </source>
</evidence>
<evidence type="ECO:0000269" key="3">
    <source>
    </source>
</evidence>
<evidence type="ECO:0000305" key="4"/>
<evidence type="ECO:0000305" key="5">
    <source>
    </source>
</evidence>
<evidence type="ECO:0007744" key="6">
    <source>
        <dbReference type="PDB" id="6XBW"/>
    </source>
</evidence>
<evidence type="ECO:0007744" key="7">
    <source>
        <dbReference type="PDB" id="6XBY"/>
    </source>
</evidence>
<evidence type="ECO:0007829" key="8">
    <source>
        <dbReference type="PDB" id="6XBW"/>
    </source>
</evidence>
<accession>P31404</accession>
<accession>Q3MHQ8</accession>
<name>VATA_BOVIN</name>
<comment type="function">
    <text evidence="1 3">Catalytic subunit of the V1 complex of vacuolar(H+)-ATPase (V-ATPase), a multisubunit enzyme composed of a peripheral complex (V1) that hydrolyzes ATP and a membrane integral complex (V0) that translocates protons (PubMed:32764564). V-ATPase is responsible for acidifying and maintaining the pH of intracellular compartments and in some cell types, is targeted to the plasma membrane, where it is responsible for acidifying the extracellular environment (PubMed:32764564). In aerobic conditions, involved in intracellular iron homeostasis, thus triggering the activity of Fe(2+) prolyl hydroxylase (PHD) enzymes, and leading to HIF1A hydroxylation and subsequent proteasomal degradation (By similarity). May play a role in neurite development and synaptic connectivity (By similarity).</text>
</comment>
<comment type="catalytic activity">
    <reaction evidence="3">
        <text>ATP + H2O + 4 H(+)(in) = ADP + phosphate + 5 H(+)(out)</text>
        <dbReference type="Rhea" id="RHEA:57720"/>
        <dbReference type="ChEBI" id="CHEBI:15377"/>
        <dbReference type="ChEBI" id="CHEBI:15378"/>
        <dbReference type="ChEBI" id="CHEBI:30616"/>
        <dbReference type="ChEBI" id="CHEBI:43474"/>
        <dbReference type="ChEBI" id="CHEBI:456216"/>
        <dbReference type="EC" id="7.1.2.2"/>
    </reaction>
</comment>
<comment type="activity regulation">
    <text evidence="3 5">ATP hydrolysis occurs at the interface between the nucleotide-binding domains of subunits A and B (Probable). ATP hydrolysis triggers a conformational change in the subunits D and F, which induces a shift of subunit d (Probable). The c-ring is subsequently rotated and results in a continuous proton translocation across the membrane (Probable). The V-ATPase is inhibited by bafilomycin A (PubMed:32764564).</text>
</comment>
<comment type="subunit">
    <text evidence="1 2 3">V-ATPase is a heteromultimeric enzyme made up of two complexes: the ATP-hydrolytic V1 complex and the proton translocation V0 complex (PubMed:32764564). The V1 complex consists of three catalytic AB heterodimers that form a heterohexamer, three peripheral stalks each consisting of EG heterodimers, one central rotor including subunits D and F, and the regulatory subunits C and H (PubMed:32764564). The proton translocation complex V0 consists of the proton transport subunit a, a ring of proteolipid subunits c9c'', rotary subunit d, subunits e and f, and the accessory subunits ATP6AP1/Ac45 and ATP6AP2/PRR (PubMed:32764564). Interacts with the V0 complex V-ATPase subunit a4 ATP6V0A4 (By similarity). Interacts with WFS1 (By similarity). Interacts with alpha-crystallin B chain/CRYAB and with MTOR, forming a ternary complex (By similarity).</text>
</comment>
<comment type="subcellular location">
    <subcellularLocation>
        <location evidence="1">Cytoplasm</location>
    </subcellularLocation>
    <subcellularLocation>
        <location evidence="2">Cytoplasm</location>
        <location evidence="2">Cytosol</location>
    </subcellularLocation>
    <subcellularLocation>
        <location evidence="1">Cytoplasmic vesicle</location>
        <location evidence="1">Secretory vesicle</location>
    </subcellularLocation>
    <subcellularLocation>
        <location evidence="3">Cytoplasmic vesicle</location>
        <location evidence="3">Clathrin-coated vesicle membrane</location>
        <topology evidence="4">Peripheral membrane protein</topology>
    </subcellularLocation>
    <subcellularLocation>
        <location evidence="2">Lysosome</location>
    </subcellularLocation>
    <text evidence="1">Co-localizes with WFS1 in the secretory granules in neuroblastoma cell lines.</text>
</comment>
<comment type="tissue specificity">
    <text evidence="3">Expressed in brain (at protein level).</text>
</comment>
<comment type="PTM">
    <text evidence="2">Phosphorylation at Ser-384 by AMPK down-regulates its enzyme activity.</text>
</comment>
<comment type="similarity">
    <text evidence="4">Belongs to the ATPase alpha/beta chains family.</text>
</comment>
<comment type="sequence caution" evidence="4">
    <conflict type="erroneous initiation">
        <sequence resource="EMBL-CDS" id="AAI05146"/>
    </conflict>
</comment>
<comment type="sequence caution" evidence="4">
    <conflict type="erroneous initiation">
        <sequence resource="EMBL-CDS" id="CAA41276"/>
    </conflict>
</comment>
<feature type="chain" id="PRO_0000144559" description="V-type proton ATPase catalytic subunit A">
    <location>
        <begin position="1"/>
        <end position="617"/>
    </location>
</feature>
<feature type="binding site" evidence="5 6 7">
    <location>
        <begin position="250"/>
        <end position="257"/>
    </location>
    <ligand>
        <name>ATP</name>
        <dbReference type="ChEBI" id="CHEBI:30616"/>
    </ligand>
</feature>
<feature type="modified residue" description="Phosphothreonine" evidence="1">
    <location>
        <position position="136"/>
    </location>
</feature>
<feature type="modified residue" description="Phosphoserine; by AMPK" evidence="2">
    <location>
        <position position="384"/>
    </location>
</feature>
<feature type="sequence conflict" description="In Ref. 1; AAA30392." evidence="4" ref="1">
    <original>G</original>
    <variation>C</variation>
    <location>
        <position position="91"/>
    </location>
</feature>
<feature type="strand" evidence="8">
    <location>
        <begin position="18"/>
        <end position="20"/>
    </location>
</feature>
<feature type="strand" evidence="8">
    <location>
        <begin position="26"/>
        <end position="33"/>
    </location>
</feature>
<feature type="strand" evidence="8">
    <location>
        <begin position="41"/>
        <end position="45"/>
    </location>
</feature>
<feature type="turn" evidence="8">
    <location>
        <begin position="46"/>
        <end position="49"/>
    </location>
</feature>
<feature type="strand" evidence="8">
    <location>
        <begin position="50"/>
        <end position="58"/>
    </location>
</feature>
<feature type="strand" evidence="8">
    <location>
        <begin position="61"/>
        <end position="68"/>
    </location>
</feature>
<feature type="strand" evidence="8">
    <location>
        <begin position="79"/>
        <end position="93"/>
    </location>
</feature>
<feature type="helix" evidence="8">
    <location>
        <begin position="106"/>
        <end position="113"/>
    </location>
</feature>
<feature type="strand" evidence="8">
    <location>
        <begin position="115"/>
        <end position="117"/>
    </location>
</feature>
<feature type="strand" evidence="8">
    <location>
        <begin position="129"/>
        <end position="131"/>
    </location>
</feature>
<feature type="strand" evidence="8">
    <location>
        <begin position="133"/>
        <end position="137"/>
    </location>
</feature>
<feature type="strand" evidence="8">
    <location>
        <begin position="152"/>
        <end position="157"/>
    </location>
</feature>
<feature type="strand" evidence="8">
    <location>
        <begin position="159"/>
        <end position="161"/>
    </location>
</feature>
<feature type="strand" evidence="8">
    <location>
        <begin position="163"/>
        <end position="167"/>
    </location>
</feature>
<feature type="strand" evidence="8">
    <location>
        <begin position="174"/>
        <end position="179"/>
    </location>
</feature>
<feature type="strand" evidence="8">
    <location>
        <begin position="182"/>
        <end position="185"/>
    </location>
</feature>
<feature type="strand" evidence="8">
    <location>
        <begin position="187"/>
        <end position="189"/>
    </location>
</feature>
<feature type="strand" evidence="8">
    <location>
        <begin position="192"/>
        <end position="195"/>
    </location>
</feature>
<feature type="strand" evidence="8">
    <location>
        <begin position="201"/>
        <end position="203"/>
    </location>
</feature>
<feature type="strand" evidence="8">
    <location>
        <begin position="207"/>
        <end position="213"/>
    </location>
</feature>
<feature type="strand" evidence="8">
    <location>
        <begin position="218"/>
        <end position="220"/>
    </location>
</feature>
<feature type="strand" evidence="8">
    <location>
        <begin position="225"/>
        <end position="227"/>
    </location>
</feature>
<feature type="helix" evidence="8">
    <location>
        <begin position="232"/>
        <end position="236"/>
    </location>
</feature>
<feature type="strand" evidence="8">
    <location>
        <begin position="245"/>
        <end position="249"/>
    </location>
</feature>
<feature type="strand" evidence="8">
    <location>
        <begin position="252"/>
        <end position="255"/>
    </location>
</feature>
<feature type="helix" evidence="8">
    <location>
        <begin position="256"/>
        <end position="265"/>
    </location>
</feature>
<feature type="strand" evidence="8">
    <location>
        <begin position="266"/>
        <end position="268"/>
    </location>
</feature>
<feature type="strand" evidence="8">
    <location>
        <begin position="270"/>
        <end position="278"/>
    </location>
</feature>
<feature type="helix" evidence="8">
    <location>
        <begin position="283"/>
        <end position="290"/>
    </location>
</feature>
<feature type="helix" evidence="8">
    <location>
        <begin position="291"/>
        <end position="293"/>
    </location>
</feature>
<feature type="strand" evidence="8">
    <location>
        <begin position="299"/>
        <end position="301"/>
    </location>
</feature>
<feature type="helix" evidence="8">
    <location>
        <begin position="305"/>
        <end position="308"/>
    </location>
</feature>
<feature type="strand" evidence="8">
    <location>
        <begin position="309"/>
        <end position="314"/>
    </location>
</feature>
<feature type="helix" evidence="8">
    <location>
        <begin position="320"/>
        <end position="338"/>
    </location>
</feature>
<feature type="turn" evidence="8">
    <location>
        <begin position="339"/>
        <end position="341"/>
    </location>
</feature>
<feature type="strand" evidence="8">
    <location>
        <begin position="343"/>
        <end position="349"/>
    </location>
</feature>
<feature type="helix" evidence="8">
    <location>
        <begin position="351"/>
        <end position="364"/>
    </location>
</feature>
<feature type="helix" evidence="8">
    <location>
        <begin position="378"/>
        <end position="386"/>
    </location>
</feature>
<feature type="strand" evidence="8">
    <location>
        <begin position="395"/>
        <end position="398"/>
    </location>
</feature>
<feature type="strand" evidence="8">
    <location>
        <begin position="401"/>
        <end position="410"/>
    </location>
</feature>
<feature type="helix" evidence="8">
    <location>
        <begin position="413"/>
        <end position="415"/>
    </location>
</feature>
<feature type="helix" evidence="8">
    <location>
        <begin position="422"/>
        <end position="426"/>
    </location>
</feature>
<feature type="strand" evidence="8">
    <location>
        <begin position="430"/>
        <end position="432"/>
    </location>
</feature>
<feature type="helix" evidence="8">
    <location>
        <begin position="437"/>
        <end position="441"/>
    </location>
</feature>
<feature type="strand" evidence="8">
    <location>
        <begin position="450"/>
        <end position="452"/>
    </location>
</feature>
<feature type="strand" evidence="8">
    <location>
        <begin position="454"/>
        <end position="456"/>
    </location>
</feature>
<feature type="helix" evidence="8">
    <location>
        <begin position="458"/>
        <end position="468"/>
    </location>
</feature>
<feature type="helix" evidence="8">
    <location>
        <begin position="473"/>
        <end position="495"/>
    </location>
</feature>
<feature type="helix" evidence="8">
    <location>
        <begin position="503"/>
        <end position="518"/>
    </location>
</feature>
<feature type="helix" evidence="8">
    <location>
        <begin position="527"/>
        <end position="529"/>
    </location>
</feature>
<feature type="helix" evidence="8">
    <location>
        <begin position="534"/>
        <end position="555"/>
    </location>
</feature>
<feature type="strand" evidence="8">
    <location>
        <begin position="560"/>
        <end position="562"/>
    </location>
</feature>
<feature type="helix" evidence="8">
    <location>
        <begin position="567"/>
        <end position="573"/>
    </location>
</feature>
<feature type="turn" evidence="8">
    <location>
        <begin position="574"/>
        <end position="576"/>
    </location>
</feature>
<feature type="helix" evidence="8">
    <location>
        <begin position="577"/>
        <end position="581"/>
    </location>
</feature>
<feature type="turn" evidence="8">
    <location>
        <begin position="582"/>
        <end position="585"/>
    </location>
</feature>
<feature type="helix" evidence="8">
    <location>
        <begin position="594"/>
        <end position="608"/>
    </location>
</feature>
<feature type="turn" evidence="8">
    <location>
        <begin position="609"/>
        <end position="611"/>
    </location>
</feature>
<dbReference type="EC" id="7.1.2.2" evidence="3"/>
<dbReference type="EMBL" id="M80430">
    <property type="protein sequence ID" value="AAA30392.1"/>
    <property type="molecule type" value="mRNA"/>
</dbReference>
<dbReference type="EMBL" id="X58386">
    <property type="protein sequence ID" value="CAA41276.1"/>
    <property type="status" value="ALT_INIT"/>
    <property type="molecule type" value="mRNA"/>
</dbReference>
<dbReference type="EMBL" id="BC105145">
    <property type="protein sequence ID" value="AAI05146.1"/>
    <property type="status" value="ALT_INIT"/>
    <property type="molecule type" value="mRNA"/>
</dbReference>
<dbReference type="PIR" id="S19659">
    <property type="entry name" value="S19659"/>
</dbReference>
<dbReference type="RefSeq" id="NP_776929.1">
    <property type="nucleotide sequence ID" value="NM_174504.2"/>
</dbReference>
<dbReference type="RefSeq" id="XP_015326478.1">
    <property type="nucleotide sequence ID" value="XM_015470992.1"/>
</dbReference>
<dbReference type="PDB" id="6XBW">
    <property type="method" value="EM"/>
    <property type="resolution" value="3.37 A"/>
    <property type="chains" value="A/B/C=1-617"/>
</dbReference>
<dbReference type="PDB" id="6XBY">
    <property type="method" value="EM"/>
    <property type="resolution" value="3.79 A"/>
    <property type="chains" value="A/B/C=1-617"/>
</dbReference>
<dbReference type="PDB" id="7KHR">
    <property type="method" value="EM"/>
    <property type="resolution" value="3.62 A"/>
    <property type="chains" value="A/B/C=1-617"/>
</dbReference>
<dbReference type="PDB" id="7UNE">
    <property type="method" value="EM"/>
    <property type="resolution" value="3.73 A"/>
    <property type="chains" value="L/M/N=1-617"/>
</dbReference>
<dbReference type="PDBsum" id="6XBW"/>
<dbReference type="PDBsum" id="6XBY"/>
<dbReference type="PDBsum" id="7KHR"/>
<dbReference type="PDBsum" id="7UNE"/>
<dbReference type="EMDB" id="EMD-22121"/>
<dbReference type="EMDB" id="EMD-22122"/>
<dbReference type="EMDB" id="EMD-22880"/>
<dbReference type="EMDB" id="EMD-26622"/>
<dbReference type="SMR" id="P31404"/>
<dbReference type="CORUM" id="P31404"/>
<dbReference type="FunCoup" id="P31404">
    <property type="interactions" value="3395"/>
</dbReference>
<dbReference type="STRING" id="9913.ENSBTAP00000050728"/>
<dbReference type="PaxDb" id="9913-ENSBTAP00000050728"/>
<dbReference type="PeptideAtlas" id="P31404"/>
<dbReference type="GeneID" id="282147"/>
<dbReference type="KEGG" id="bta:282147"/>
<dbReference type="CTD" id="523"/>
<dbReference type="VEuPathDB" id="HostDB:ENSBTAG00000002703"/>
<dbReference type="eggNOG" id="KOG1352">
    <property type="taxonomic scope" value="Eukaryota"/>
</dbReference>
<dbReference type="HOGENOM" id="CLU_008162_3_1_1"/>
<dbReference type="InParanoid" id="P31404"/>
<dbReference type="OMA" id="RIVKTFW"/>
<dbReference type="OrthoDB" id="1676488at2759"/>
<dbReference type="TreeFam" id="TF300811"/>
<dbReference type="Reactome" id="R-BTA-1222556">
    <property type="pathway name" value="ROS and RNS production in phagocytes"/>
</dbReference>
<dbReference type="Reactome" id="R-BTA-77387">
    <property type="pathway name" value="Insulin receptor recycling"/>
</dbReference>
<dbReference type="Reactome" id="R-BTA-917977">
    <property type="pathway name" value="Transferrin endocytosis and recycling"/>
</dbReference>
<dbReference type="Reactome" id="R-BTA-9639288">
    <property type="pathway name" value="Amino acids regulate mTORC1"/>
</dbReference>
<dbReference type="Reactome" id="R-BTA-983712">
    <property type="pathway name" value="Ion channel transport"/>
</dbReference>
<dbReference type="Proteomes" id="UP000009136">
    <property type="component" value="Chromosome 1"/>
</dbReference>
<dbReference type="Bgee" id="ENSBTAG00000002703">
    <property type="expression patterns" value="Expressed in occipital lobe and 105 other cell types or tissues"/>
</dbReference>
<dbReference type="GO" id="GO:0030665">
    <property type="term" value="C:clathrin-coated vesicle membrane"/>
    <property type="evidence" value="ECO:0007669"/>
    <property type="project" value="UniProtKB-SubCell"/>
</dbReference>
<dbReference type="GO" id="GO:0005829">
    <property type="term" value="C:cytosol"/>
    <property type="evidence" value="ECO:0000250"/>
    <property type="project" value="UniProtKB"/>
</dbReference>
<dbReference type="GO" id="GO:0005764">
    <property type="term" value="C:lysosome"/>
    <property type="evidence" value="ECO:0007669"/>
    <property type="project" value="UniProtKB-SubCell"/>
</dbReference>
<dbReference type="GO" id="GO:0005886">
    <property type="term" value="C:plasma membrane"/>
    <property type="evidence" value="ECO:0000250"/>
    <property type="project" value="UniProtKB"/>
</dbReference>
<dbReference type="GO" id="GO:0030133">
    <property type="term" value="C:transport vesicle"/>
    <property type="evidence" value="ECO:0007669"/>
    <property type="project" value="UniProtKB-SubCell"/>
</dbReference>
<dbReference type="GO" id="GO:0000221">
    <property type="term" value="C:vacuolar proton-transporting V-type ATPase, V1 domain"/>
    <property type="evidence" value="ECO:0000314"/>
    <property type="project" value="UniProtKB"/>
</dbReference>
<dbReference type="GO" id="GO:0005524">
    <property type="term" value="F:ATP binding"/>
    <property type="evidence" value="ECO:0007669"/>
    <property type="project" value="UniProtKB-KW"/>
</dbReference>
<dbReference type="GO" id="GO:0016887">
    <property type="term" value="F:ATP hydrolysis activity"/>
    <property type="evidence" value="ECO:0007669"/>
    <property type="project" value="InterPro"/>
</dbReference>
<dbReference type="GO" id="GO:0046961">
    <property type="term" value="F:proton-transporting ATPase activity, rotational mechanism"/>
    <property type="evidence" value="ECO:0000250"/>
    <property type="project" value="UniProtKB"/>
</dbReference>
<dbReference type="GO" id="GO:0046034">
    <property type="term" value="P:ATP metabolic process"/>
    <property type="evidence" value="ECO:0007669"/>
    <property type="project" value="InterPro"/>
</dbReference>
<dbReference type="GO" id="GO:0036295">
    <property type="term" value="P:cellular response to increased oxygen levels"/>
    <property type="evidence" value="ECO:0000250"/>
    <property type="project" value="UniProtKB"/>
</dbReference>
<dbReference type="GO" id="GO:0006879">
    <property type="term" value="P:intracellular iron ion homeostasis"/>
    <property type="evidence" value="ECO:0000250"/>
    <property type="project" value="UniProtKB"/>
</dbReference>
<dbReference type="GO" id="GO:0045851">
    <property type="term" value="P:pH reduction"/>
    <property type="evidence" value="ECO:0000305"/>
    <property type="project" value="UniProtKB"/>
</dbReference>
<dbReference type="GO" id="GO:1902600">
    <property type="term" value="P:proton transmembrane transport"/>
    <property type="evidence" value="ECO:0000318"/>
    <property type="project" value="GO_Central"/>
</dbReference>
<dbReference type="CDD" id="cd18111">
    <property type="entry name" value="ATP-synt_V_A-type_alpha_C"/>
    <property type="match status" value="1"/>
</dbReference>
<dbReference type="CDD" id="cd18119">
    <property type="entry name" value="ATP-synt_V_A-type_alpha_N"/>
    <property type="match status" value="1"/>
</dbReference>
<dbReference type="CDD" id="cd01134">
    <property type="entry name" value="V_A-ATPase_A"/>
    <property type="match status" value="1"/>
</dbReference>
<dbReference type="FunFam" id="1.10.1140.10:FF:000002">
    <property type="entry name" value="V-type proton ATPase catalytic subunit A"/>
    <property type="match status" value="1"/>
</dbReference>
<dbReference type="FunFam" id="2.40.30.20:FF:000002">
    <property type="entry name" value="V-type proton ATPase catalytic subunit A"/>
    <property type="match status" value="1"/>
</dbReference>
<dbReference type="FunFam" id="2.40.50.100:FF:000008">
    <property type="entry name" value="V-type proton ATPase catalytic subunit A"/>
    <property type="match status" value="1"/>
</dbReference>
<dbReference type="FunFam" id="3.40.50.300:FF:000052">
    <property type="entry name" value="V-type proton ATPase catalytic subunit A"/>
    <property type="match status" value="1"/>
</dbReference>
<dbReference type="Gene3D" id="2.40.30.20">
    <property type="match status" value="1"/>
</dbReference>
<dbReference type="Gene3D" id="2.40.50.100">
    <property type="match status" value="1"/>
</dbReference>
<dbReference type="Gene3D" id="1.10.1140.10">
    <property type="entry name" value="Bovine Mitochondrial F1-atpase, Atp Synthase Beta Chain, Chain D, domain 3"/>
    <property type="match status" value="1"/>
</dbReference>
<dbReference type="Gene3D" id="3.40.50.300">
    <property type="entry name" value="P-loop containing nucleotide triphosphate hydrolases"/>
    <property type="match status" value="1"/>
</dbReference>
<dbReference type="HAMAP" id="MF_00309">
    <property type="entry name" value="ATP_synth_A_arch"/>
    <property type="match status" value="1"/>
</dbReference>
<dbReference type="InterPro" id="IPR055190">
    <property type="entry name" value="ATP-synt_VA_C"/>
</dbReference>
<dbReference type="InterPro" id="IPR031686">
    <property type="entry name" value="ATP-synth_a_Xtn"/>
</dbReference>
<dbReference type="InterPro" id="IPR023366">
    <property type="entry name" value="ATP_synth_asu-like_sf"/>
</dbReference>
<dbReference type="InterPro" id="IPR020003">
    <property type="entry name" value="ATPase_a/bsu_AS"/>
</dbReference>
<dbReference type="InterPro" id="IPR004100">
    <property type="entry name" value="ATPase_F1/V1/A1_a/bsu_N"/>
</dbReference>
<dbReference type="InterPro" id="IPR036121">
    <property type="entry name" value="ATPase_F1/V1/A1_a/bsu_N_sf"/>
</dbReference>
<dbReference type="InterPro" id="IPR000194">
    <property type="entry name" value="ATPase_F1/V1/A1_a/bsu_nucl-bd"/>
</dbReference>
<dbReference type="InterPro" id="IPR024034">
    <property type="entry name" value="ATPase_F1/V1_b/a_C"/>
</dbReference>
<dbReference type="InterPro" id="IPR005725">
    <property type="entry name" value="ATPase_V1-cplx_asu"/>
</dbReference>
<dbReference type="InterPro" id="IPR027417">
    <property type="entry name" value="P-loop_NTPase"/>
</dbReference>
<dbReference type="InterPro" id="IPR022878">
    <property type="entry name" value="V-ATPase_asu"/>
</dbReference>
<dbReference type="NCBIfam" id="NF003220">
    <property type="entry name" value="PRK04192.1"/>
    <property type="match status" value="1"/>
</dbReference>
<dbReference type="NCBIfam" id="TIGR01042">
    <property type="entry name" value="V-ATPase_V1_A"/>
    <property type="match status" value="1"/>
</dbReference>
<dbReference type="PANTHER" id="PTHR43607">
    <property type="entry name" value="V-TYPE PROTON ATPASE CATALYTIC SUBUNIT A"/>
    <property type="match status" value="1"/>
</dbReference>
<dbReference type="PANTHER" id="PTHR43607:SF9">
    <property type="entry name" value="V-TYPE PROTON ATPASE CATALYTIC SUBUNIT A"/>
    <property type="match status" value="1"/>
</dbReference>
<dbReference type="Pfam" id="PF00006">
    <property type="entry name" value="ATP-synt_ab"/>
    <property type="match status" value="1"/>
</dbReference>
<dbReference type="Pfam" id="PF02874">
    <property type="entry name" value="ATP-synt_ab_N"/>
    <property type="match status" value="1"/>
</dbReference>
<dbReference type="Pfam" id="PF16886">
    <property type="entry name" value="ATP-synt_ab_Xtn"/>
    <property type="match status" value="1"/>
</dbReference>
<dbReference type="Pfam" id="PF22919">
    <property type="entry name" value="ATP-synt_VA_C"/>
    <property type="match status" value="1"/>
</dbReference>
<dbReference type="SUPFAM" id="SSF47917">
    <property type="entry name" value="C-terminal domain of alpha and beta subunits of F1 ATP synthase"/>
    <property type="match status" value="1"/>
</dbReference>
<dbReference type="SUPFAM" id="SSF50615">
    <property type="entry name" value="N-terminal domain of alpha and beta subunits of F1 ATP synthase"/>
    <property type="match status" value="1"/>
</dbReference>
<dbReference type="SUPFAM" id="SSF52540">
    <property type="entry name" value="P-loop containing nucleoside triphosphate hydrolases"/>
    <property type="match status" value="1"/>
</dbReference>
<dbReference type="PROSITE" id="PS00152">
    <property type="entry name" value="ATPASE_ALPHA_BETA"/>
    <property type="match status" value="1"/>
</dbReference>
<keyword id="KW-0002">3D-structure</keyword>
<keyword id="KW-0067">ATP-binding</keyword>
<keyword id="KW-0963">Cytoplasm</keyword>
<keyword id="KW-0968">Cytoplasmic vesicle</keyword>
<keyword id="KW-0375">Hydrogen ion transport</keyword>
<keyword id="KW-0406">Ion transport</keyword>
<keyword id="KW-0458">Lysosome</keyword>
<keyword id="KW-0472">Membrane</keyword>
<keyword id="KW-0547">Nucleotide-binding</keyword>
<keyword id="KW-0597">Phosphoprotein</keyword>
<keyword id="KW-1185">Reference proteome</keyword>
<keyword id="KW-1278">Translocase</keyword>
<keyword id="KW-0813">Transport</keyword>
<reference key="1">
    <citation type="journal article" date="1991" name="J. Biol. Chem.">
        <title>A single gene encodes the catalytic 'A' subunit of the bovine vacuolar H(+)-ATPase.</title>
        <authorList>
            <person name="Puopolo K."/>
            <person name="Kumamoto C."/>
            <person name="Adachi I."/>
            <person name="Forgac M."/>
        </authorList>
    </citation>
    <scope>NUCLEOTIDE SEQUENCE [MRNA]</scope>
</reference>
<reference key="2">
    <citation type="journal article" date="1991" name="FEBS Lett.">
        <title>Structure and expression of subunit A from the bovine chromaffin cell vacuolar ATPase.</title>
        <authorList>
            <person name="Pan Y.X."/>
            <person name="Xu J."/>
            <person name="Strasser J.E."/>
            <person name="Howell M."/>
            <person name="Dean G.E."/>
        </authorList>
    </citation>
    <scope>NUCLEOTIDE SEQUENCE [MRNA]</scope>
    <source>
        <tissue>Adrenal medulla</tissue>
    </source>
</reference>
<reference key="3">
    <citation type="submission" date="2005-09" db="EMBL/GenBank/DDBJ databases">
        <authorList>
            <consortium name="NIH - Mammalian Gene Collection (MGC) project"/>
        </authorList>
    </citation>
    <scope>NUCLEOTIDE SEQUENCE [LARGE SCALE MRNA]</scope>
    <source>
        <strain>Crossbred X Angus</strain>
        <tissue>Ileum</tissue>
    </source>
</reference>
<reference evidence="6 7" key="4">
    <citation type="journal article" date="2020" name="Nat. Commun.">
        <title>Cryo-EM structures of intact V-ATPase from bovine brain.</title>
        <authorList>
            <person name="Wang R."/>
            <person name="Long T."/>
            <person name="Hassan A."/>
            <person name="Wang J."/>
            <person name="Sun Y."/>
            <person name="Xie X.S."/>
            <person name="Li X."/>
        </authorList>
    </citation>
    <scope>STRUCTURE BY ELECTRON MICROSCOPY (3.37 ANGSTROMS) IN COMPLEX WITH ADP</scope>
    <scope>FUNCTION</scope>
    <scope>CATALYTIC ACTIVITY</scope>
    <scope>ACTIVITY REGULATION</scope>
    <scope>IDENTIFICATION IN THE V-ATPASE COMPLEX</scope>
    <scope>SUBCELLULAR LOCATION</scope>
    <scope>IDENTIFICATION BY MASS SPECTROMETRY</scope>
    <scope>TISSUE SPECIFICITY</scope>
</reference>
<organism>
    <name type="scientific">Bos taurus</name>
    <name type="common">Bovine</name>
    <dbReference type="NCBI Taxonomy" id="9913"/>
    <lineage>
        <taxon>Eukaryota</taxon>
        <taxon>Metazoa</taxon>
        <taxon>Chordata</taxon>
        <taxon>Craniata</taxon>
        <taxon>Vertebrata</taxon>
        <taxon>Euteleostomi</taxon>
        <taxon>Mammalia</taxon>
        <taxon>Eutheria</taxon>
        <taxon>Laurasiatheria</taxon>
        <taxon>Artiodactyla</taxon>
        <taxon>Ruminantia</taxon>
        <taxon>Pecora</taxon>
        <taxon>Bovidae</taxon>
        <taxon>Bovinae</taxon>
        <taxon>Bos</taxon>
    </lineage>
</organism>
<proteinExistence type="evidence at protein level"/>